<accession>Q7LDG7</accession>
<accession>A6NDC7</accession>
<accession>O00538</accession>
<accession>Q9UL65</accession>
<proteinExistence type="evidence at protein level"/>
<evidence type="ECO:0000250" key="1"/>
<evidence type="ECO:0000250" key="2">
    <source>
        <dbReference type="UniProtKB" id="P0C643"/>
    </source>
</evidence>
<evidence type="ECO:0000250" key="3">
    <source>
        <dbReference type="UniProtKB" id="Q9QUG9"/>
    </source>
</evidence>
<evidence type="ECO:0000255" key="4">
    <source>
        <dbReference type="PROSITE-ProRule" id="PRU00135"/>
    </source>
</evidence>
<evidence type="ECO:0000255" key="5">
    <source>
        <dbReference type="PROSITE-ProRule" id="PRU00168"/>
    </source>
</evidence>
<evidence type="ECO:0000255" key="6">
    <source>
        <dbReference type="PROSITE-ProRule" id="PRU00226"/>
    </source>
</evidence>
<evidence type="ECO:0000255" key="7">
    <source>
        <dbReference type="PROSITE-ProRule" id="PRU00448"/>
    </source>
</evidence>
<evidence type="ECO:0000256" key="8">
    <source>
        <dbReference type="SAM" id="MobiDB-lite"/>
    </source>
</evidence>
<evidence type="ECO:0000269" key="9">
    <source>
    </source>
</evidence>
<evidence type="ECO:0000269" key="10">
    <source>
    </source>
</evidence>
<evidence type="ECO:0000269" key="11">
    <source>
    </source>
</evidence>
<evidence type="ECO:0000269" key="12">
    <source>
    </source>
</evidence>
<evidence type="ECO:0000269" key="13">
    <source>
    </source>
</evidence>
<evidence type="ECO:0000269" key="14">
    <source>
    </source>
</evidence>
<evidence type="ECO:0000269" key="15">
    <source>
    </source>
</evidence>
<evidence type="ECO:0000269" key="16">
    <source>
    </source>
</evidence>
<evidence type="ECO:0000269" key="17">
    <source>
    </source>
</evidence>
<evidence type="ECO:0000269" key="18">
    <source>
    </source>
</evidence>
<evidence type="ECO:0000269" key="19">
    <source>
    </source>
</evidence>
<evidence type="ECO:0000303" key="20">
    <source>
    </source>
</evidence>
<evidence type="ECO:0000303" key="21">
    <source>
    </source>
</evidence>
<evidence type="ECO:0000305" key="22"/>
<evidence type="ECO:0000305" key="23">
    <source>
    </source>
</evidence>
<evidence type="ECO:0000305" key="24">
    <source>
    </source>
</evidence>
<evidence type="ECO:0007829" key="25">
    <source>
        <dbReference type="PDB" id="2MA2"/>
    </source>
</evidence>
<evidence type="ECO:0007829" key="26">
    <source>
        <dbReference type="PDB" id="6AXF"/>
    </source>
</evidence>
<dbReference type="EMBL" id="Y12336">
    <property type="protein sequence ID" value="CAA73005.1"/>
    <property type="molecule type" value="mRNA"/>
</dbReference>
<dbReference type="EMBL" id="AF081194">
    <property type="protein sequence ID" value="AAC79698.1"/>
    <property type="molecule type" value="mRNA"/>
</dbReference>
<dbReference type="EMBL" id="U78170">
    <property type="protein sequence ID" value="AAD12741.1"/>
    <property type="molecule type" value="mRNA"/>
</dbReference>
<dbReference type="EMBL" id="AF043722">
    <property type="protein sequence ID" value="AAF07219.1"/>
    <property type="molecule type" value="mRNA"/>
</dbReference>
<dbReference type="EMBL" id="AF043723">
    <property type="protein sequence ID" value="AAF07220.1"/>
    <property type="molecule type" value="mRNA"/>
</dbReference>
<dbReference type="EMBL" id="AK092882">
    <property type="protein sequence ID" value="BAG52620.1"/>
    <property type="molecule type" value="mRNA"/>
</dbReference>
<dbReference type="EMBL" id="AP001462">
    <property type="status" value="NOT_ANNOTATED_CDS"/>
    <property type="molecule type" value="Genomic_DNA"/>
</dbReference>
<dbReference type="EMBL" id="CH471076">
    <property type="protein sequence ID" value="EAW74281.1"/>
    <property type="molecule type" value="Genomic_DNA"/>
</dbReference>
<dbReference type="EMBL" id="BC117151">
    <property type="protein sequence ID" value="AAI17152.1"/>
    <property type="molecule type" value="mRNA"/>
</dbReference>
<dbReference type="CCDS" id="CCDS31598.1">
    <molecule id="Q7LDG7-1"/>
</dbReference>
<dbReference type="RefSeq" id="NP_001092140.1">
    <molecule id="Q7LDG7-1"/>
    <property type="nucleotide sequence ID" value="NM_001098670.2"/>
</dbReference>
<dbReference type="RefSeq" id="NP_001092141.1">
    <molecule id="Q7LDG7-1"/>
    <property type="nucleotide sequence ID" value="NM_001098671.2"/>
</dbReference>
<dbReference type="RefSeq" id="NP_001305327.1">
    <property type="nucleotide sequence ID" value="NM_001318398.1"/>
</dbReference>
<dbReference type="RefSeq" id="NP_722541.1">
    <molecule id="Q7LDG7-1"/>
    <property type="nucleotide sequence ID" value="NM_153819.1"/>
</dbReference>
<dbReference type="RefSeq" id="XP_011543022.1">
    <molecule id="Q7LDG7-4"/>
    <property type="nucleotide sequence ID" value="XM_011544720.3"/>
</dbReference>
<dbReference type="RefSeq" id="XP_011543023.1">
    <molecule id="Q7LDG7-4"/>
    <property type="nucleotide sequence ID" value="XM_011544721.2"/>
</dbReference>
<dbReference type="RefSeq" id="XP_011543024.1">
    <property type="nucleotide sequence ID" value="XM_011544722.1"/>
</dbReference>
<dbReference type="RefSeq" id="XP_011543025.1">
    <molecule id="Q7LDG7-4"/>
    <property type="nucleotide sequence ID" value="XM_011544723.4"/>
</dbReference>
<dbReference type="RefSeq" id="XP_016872573.1">
    <property type="nucleotide sequence ID" value="XM_017017084.1"/>
</dbReference>
<dbReference type="RefSeq" id="XP_054223409.1">
    <molecule id="Q7LDG7-4"/>
    <property type="nucleotide sequence ID" value="XM_054367434.1"/>
</dbReference>
<dbReference type="RefSeq" id="XP_054223410.1">
    <molecule id="Q7LDG7-4"/>
    <property type="nucleotide sequence ID" value="XM_054367435.1"/>
</dbReference>
<dbReference type="RefSeq" id="XP_054223411.1">
    <molecule id="Q7LDG7-4"/>
    <property type="nucleotide sequence ID" value="XM_054367436.1"/>
</dbReference>
<dbReference type="PDB" id="2MA2">
    <property type="method" value="NMR"/>
    <property type="chains" value="A=417-497"/>
</dbReference>
<dbReference type="PDB" id="6AXF">
    <property type="method" value="X-ray"/>
    <property type="resolution" value="3.10 A"/>
    <property type="chains" value="A/C/E/G/I/K/M/O=1-394"/>
</dbReference>
<dbReference type="PDBsum" id="2MA2"/>
<dbReference type="PDBsum" id="6AXF"/>
<dbReference type="BMRB" id="Q7LDG7"/>
<dbReference type="SMR" id="Q7LDG7"/>
<dbReference type="BioGRID" id="115529">
    <property type="interactions" value="14"/>
</dbReference>
<dbReference type="FunCoup" id="Q7LDG7">
    <property type="interactions" value="866"/>
</dbReference>
<dbReference type="IntAct" id="Q7LDG7">
    <property type="interactions" value="4"/>
</dbReference>
<dbReference type="STRING" id="9606.ENSP00000338864"/>
<dbReference type="GlyGen" id="Q7LDG7">
    <property type="glycosylation" value="2 sites, 1 O-linked glycan (2 sites)"/>
</dbReference>
<dbReference type="iPTMnet" id="Q7LDG7"/>
<dbReference type="PhosphoSitePlus" id="Q7LDG7"/>
<dbReference type="SwissPalm" id="Q7LDG7"/>
<dbReference type="BioMuta" id="RASGRP2"/>
<dbReference type="DMDM" id="74713056"/>
<dbReference type="jPOST" id="Q7LDG7"/>
<dbReference type="MassIVE" id="Q7LDG7"/>
<dbReference type="PaxDb" id="9606-ENSP00000338864"/>
<dbReference type="PeptideAtlas" id="Q7LDG7"/>
<dbReference type="ProteomicsDB" id="68852">
    <molecule id="Q7LDG7-1"/>
</dbReference>
<dbReference type="ProteomicsDB" id="68853">
    <molecule id="Q7LDG7-2"/>
</dbReference>
<dbReference type="ProteomicsDB" id="68854">
    <molecule id="Q7LDG7-3"/>
</dbReference>
<dbReference type="ProteomicsDB" id="899"/>
<dbReference type="Antibodypedia" id="2786">
    <property type="antibodies" value="137 antibodies from 27 providers"/>
</dbReference>
<dbReference type="DNASU" id="10235"/>
<dbReference type="Ensembl" id="ENST00000354024.7">
    <molecule id="Q7LDG7-1"/>
    <property type="protein sequence ID" value="ENSP00000338864.3"/>
    <property type="gene ID" value="ENSG00000068831.19"/>
</dbReference>
<dbReference type="Ensembl" id="ENST00000377494.5">
    <molecule id="Q7LDG7-4"/>
    <property type="protein sequence ID" value="ENSP00000366714.1"/>
    <property type="gene ID" value="ENSG00000068831.19"/>
</dbReference>
<dbReference type="Ensembl" id="ENST00000377497.7">
    <molecule id="Q7LDG7-1"/>
    <property type="protein sequence ID" value="ENSP00000366717.3"/>
    <property type="gene ID" value="ENSG00000068831.19"/>
</dbReference>
<dbReference type="Ensembl" id="ENST00000394432.8">
    <molecule id="Q7LDG7-1"/>
    <property type="protein sequence ID" value="ENSP00000377953.3"/>
    <property type="gene ID" value="ENSG00000068831.19"/>
</dbReference>
<dbReference type="GeneID" id="10235"/>
<dbReference type="KEGG" id="hsa:10235"/>
<dbReference type="MANE-Select" id="ENST00000394432.8">
    <property type="protein sequence ID" value="ENSP00000377953.3"/>
    <property type="RefSeq nucleotide sequence ID" value="NM_001098671.2"/>
    <property type="RefSeq protein sequence ID" value="NP_001092141.1"/>
</dbReference>
<dbReference type="UCSC" id="uc001oau.4">
    <molecule id="Q7LDG7-1"/>
    <property type="organism name" value="human"/>
</dbReference>
<dbReference type="AGR" id="HGNC:9879"/>
<dbReference type="CTD" id="10235"/>
<dbReference type="DisGeNET" id="10235"/>
<dbReference type="GeneCards" id="RASGRP2"/>
<dbReference type="HGNC" id="HGNC:9879">
    <property type="gene designation" value="RASGRP2"/>
</dbReference>
<dbReference type="HPA" id="ENSG00000068831">
    <property type="expression patterns" value="Tissue enhanced (bone marrow, lymphoid tissue)"/>
</dbReference>
<dbReference type="MalaCards" id="RASGRP2"/>
<dbReference type="MIM" id="605577">
    <property type="type" value="gene"/>
</dbReference>
<dbReference type="MIM" id="615888">
    <property type="type" value="phenotype"/>
</dbReference>
<dbReference type="neXtProt" id="NX_Q7LDG7"/>
<dbReference type="OpenTargets" id="ENSG00000068831"/>
<dbReference type="Orphanet" id="420566">
    <property type="disease" value="Bleeding disorder due to CalDAG-GEFI deficiency"/>
</dbReference>
<dbReference type="PharmGKB" id="PA34241"/>
<dbReference type="VEuPathDB" id="HostDB:ENSG00000068831"/>
<dbReference type="eggNOG" id="KOG3417">
    <property type="taxonomic scope" value="Eukaryota"/>
</dbReference>
<dbReference type="GeneTree" id="ENSGT00940000160483"/>
<dbReference type="HOGENOM" id="CLU_019261_1_0_1"/>
<dbReference type="InParanoid" id="Q7LDG7"/>
<dbReference type="OMA" id="LHIYYQQ"/>
<dbReference type="OrthoDB" id="74314at2759"/>
<dbReference type="PAN-GO" id="Q7LDG7">
    <property type="GO annotations" value="4 GO annotations based on evolutionary models"/>
</dbReference>
<dbReference type="PhylomeDB" id="Q7LDG7"/>
<dbReference type="TreeFam" id="TF312918"/>
<dbReference type="PathwayCommons" id="Q7LDG7"/>
<dbReference type="Reactome" id="R-HSA-114508">
    <property type="pathway name" value="Effects of PIP2 hydrolysis"/>
</dbReference>
<dbReference type="Reactome" id="R-HSA-2871837">
    <property type="pathway name" value="FCERI mediated NF-kB activation"/>
</dbReference>
<dbReference type="Reactome" id="R-HSA-354192">
    <property type="pathway name" value="Integrin signaling"/>
</dbReference>
<dbReference type="Reactome" id="R-HSA-392517">
    <property type="pathway name" value="Rap1 signalling"/>
</dbReference>
<dbReference type="SignaLink" id="Q7LDG7"/>
<dbReference type="BioGRID-ORCS" id="10235">
    <property type="hits" value="42 hits in 1159 CRISPR screens"/>
</dbReference>
<dbReference type="EvolutionaryTrace" id="Q7LDG7"/>
<dbReference type="GeneWiki" id="RASGRP2"/>
<dbReference type="GenomeRNAi" id="10235"/>
<dbReference type="Pharos" id="Q7LDG7">
    <property type="development level" value="Tbio"/>
</dbReference>
<dbReference type="PRO" id="PR:Q7LDG7"/>
<dbReference type="Proteomes" id="UP000005640">
    <property type="component" value="Chromosome 11"/>
</dbReference>
<dbReference type="RNAct" id="Q7LDG7">
    <property type="molecule type" value="protein"/>
</dbReference>
<dbReference type="Bgee" id="ENSG00000068831">
    <property type="expression patterns" value="Expressed in granulocyte and 177 other cell types or tissues"/>
</dbReference>
<dbReference type="ExpressionAtlas" id="Q7LDG7">
    <property type="expression patterns" value="baseline and differential"/>
</dbReference>
<dbReference type="GO" id="GO:0005829">
    <property type="term" value="C:cytosol"/>
    <property type="evidence" value="ECO:0000314"/>
    <property type="project" value="UniProtKB"/>
</dbReference>
<dbReference type="GO" id="GO:0043005">
    <property type="term" value="C:neuron projection"/>
    <property type="evidence" value="ECO:0007669"/>
    <property type="project" value="UniProtKB-KW"/>
</dbReference>
<dbReference type="GO" id="GO:0005886">
    <property type="term" value="C:plasma membrane"/>
    <property type="evidence" value="ECO:0000314"/>
    <property type="project" value="HPA"/>
</dbReference>
<dbReference type="GO" id="GO:0032587">
    <property type="term" value="C:ruffle membrane"/>
    <property type="evidence" value="ECO:0007669"/>
    <property type="project" value="UniProtKB-SubCell"/>
</dbReference>
<dbReference type="GO" id="GO:0045202">
    <property type="term" value="C:synapse"/>
    <property type="evidence" value="ECO:0007669"/>
    <property type="project" value="UniProtKB-SubCell"/>
</dbReference>
<dbReference type="GO" id="GO:0005509">
    <property type="term" value="F:calcium ion binding"/>
    <property type="evidence" value="ECO:0000304"/>
    <property type="project" value="UniProtKB"/>
</dbReference>
<dbReference type="GO" id="GO:0019992">
    <property type="term" value="F:diacylglycerol binding"/>
    <property type="evidence" value="ECO:0000303"/>
    <property type="project" value="UniProtKB"/>
</dbReference>
<dbReference type="GO" id="GO:0005085">
    <property type="term" value="F:guanyl-nucleotide exchange factor activity"/>
    <property type="evidence" value="ECO:0000314"/>
    <property type="project" value="UniProtKB"/>
</dbReference>
<dbReference type="GO" id="GO:0008289">
    <property type="term" value="F:lipid binding"/>
    <property type="evidence" value="ECO:0000304"/>
    <property type="project" value="UniProtKB"/>
</dbReference>
<dbReference type="GO" id="GO:0008270">
    <property type="term" value="F:zinc ion binding"/>
    <property type="evidence" value="ECO:0007669"/>
    <property type="project" value="UniProtKB-KW"/>
</dbReference>
<dbReference type="GO" id="GO:0071277">
    <property type="term" value="P:cellular response to calcium ion"/>
    <property type="evidence" value="ECO:0000314"/>
    <property type="project" value="UniProtKB"/>
</dbReference>
<dbReference type="GO" id="GO:0043547">
    <property type="term" value="P:positive regulation of GTPase activity"/>
    <property type="evidence" value="ECO:0000314"/>
    <property type="project" value="UniProtKB"/>
</dbReference>
<dbReference type="GO" id="GO:0007265">
    <property type="term" value="P:Ras protein signal transduction"/>
    <property type="evidence" value="ECO:0000318"/>
    <property type="project" value="GO_Central"/>
</dbReference>
<dbReference type="GO" id="GO:0001558">
    <property type="term" value="P:regulation of cell growth"/>
    <property type="evidence" value="ECO:0000303"/>
    <property type="project" value="UniProtKB"/>
</dbReference>
<dbReference type="GO" id="GO:0007165">
    <property type="term" value="P:signal transduction"/>
    <property type="evidence" value="ECO:0000304"/>
    <property type="project" value="UniProtKB"/>
</dbReference>
<dbReference type="CDD" id="cd20861">
    <property type="entry name" value="C1_RASGRP2"/>
    <property type="match status" value="1"/>
</dbReference>
<dbReference type="CDD" id="cd00051">
    <property type="entry name" value="EFh"/>
    <property type="match status" value="1"/>
</dbReference>
<dbReference type="CDD" id="cd00155">
    <property type="entry name" value="RasGEF"/>
    <property type="match status" value="1"/>
</dbReference>
<dbReference type="CDD" id="cd06224">
    <property type="entry name" value="REM"/>
    <property type="match status" value="1"/>
</dbReference>
<dbReference type="FunFam" id="3.30.60.20:FF:000023">
    <property type="entry name" value="RAS guanyl-releasing protein 1 isoform X1"/>
    <property type="match status" value="1"/>
</dbReference>
<dbReference type="FunFam" id="1.20.870.10:FF:000011">
    <property type="entry name" value="RAS guanyl-releasing protein 2 isoform X1"/>
    <property type="match status" value="1"/>
</dbReference>
<dbReference type="FunFam" id="1.10.840.10:FF:000003">
    <property type="entry name" value="Ras guanyl-releasing protein 3 isoform 1"/>
    <property type="match status" value="1"/>
</dbReference>
<dbReference type="Gene3D" id="3.30.60.20">
    <property type="match status" value="1"/>
</dbReference>
<dbReference type="Gene3D" id="1.10.238.10">
    <property type="entry name" value="EF-hand"/>
    <property type="match status" value="1"/>
</dbReference>
<dbReference type="Gene3D" id="1.10.840.10">
    <property type="entry name" value="Ras guanine-nucleotide exchange factors catalytic domain"/>
    <property type="match status" value="1"/>
</dbReference>
<dbReference type="Gene3D" id="1.20.870.10">
    <property type="entry name" value="Son of sevenless (SoS) protein Chain: S domain 1"/>
    <property type="match status" value="1"/>
</dbReference>
<dbReference type="InterPro" id="IPR046349">
    <property type="entry name" value="C1-like_sf"/>
</dbReference>
<dbReference type="InterPro" id="IPR011992">
    <property type="entry name" value="EF-hand-dom_pair"/>
</dbReference>
<dbReference type="InterPro" id="IPR018247">
    <property type="entry name" value="EF_Hand_1_Ca_BS"/>
</dbReference>
<dbReference type="InterPro" id="IPR002048">
    <property type="entry name" value="EF_hand_dom"/>
</dbReference>
<dbReference type="InterPro" id="IPR002219">
    <property type="entry name" value="PE/DAG-bd"/>
</dbReference>
<dbReference type="InterPro" id="IPR008937">
    <property type="entry name" value="Ras-like_GEF"/>
</dbReference>
<dbReference type="InterPro" id="IPR000651">
    <property type="entry name" value="Ras-like_Gua-exchang_fac_N"/>
</dbReference>
<dbReference type="InterPro" id="IPR023578">
    <property type="entry name" value="Ras_GEF_dom_sf"/>
</dbReference>
<dbReference type="InterPro" id="IPR001895">
    <property type="entry name" value="RASGEF_cat_dom"/>
</dbReference>
<dbReference type="InterPro" id="IPR036964">
    <property type="entry name" value="RASGEF_cat_dom_sf"/>
</dbReference>
<dbReference type="PANTHER" id="PTHR23113">
    <property type="entry name" value="GUANINE NUCLEOTIDE EXCHANGE FACTOR"/>
    <property type="match status" value="1"/>
</dbReference>
<dbReference type="PANTHER" id="PTHR23113:SF16">
    <property type="entry name" value="RAS GUANYL-RELEASING PROTEIN 2"/>
    <property type="match status" value="1"/>
</dbReference>
<dbReference type="Pfam" id="PF00130">
    <property type="entry name" value="C1_1"/>
    <property type="match status" value="1"/>
</dbReference>
<dbReference type="Pfam" id="PF13499">
    <property type="entry name" value="EF-hand_7"/>
    <property type="match status" value="1"/>
</dbReference>
<dbReference type="Pfam" id="PF00617">
    <property type="entry name" value="RasGEF"/>
    <property type="match status" value="1"/>
</dbReference>
<dbReference type="Pfam" id="PF00618">
    <property type="entry name" value="RasGEF_N"/>
    <property type="match status" value="1"/>
</dbReference>
<dbReference type="SMART" id="SM00109">
    <property type="entry name" value="C1"/>
    <property type="match status" value="1"/>
</dbReference>
<dbReference type="SMART" id="SM00054">
    <property type="entry name" value="EFh"/>
    <property type="match status" value="2"/>
</dbReference>
<dbReference type="SMART" id="SM00147">
    <property type="entry name" value="RasGEF"/>
    <property type="match status" value="1"/>
</dbReference>
<dbReference type="SMART" id="SM00229">
    <property type="entry name" value="RasGEFN"/>
    <property type="match status" value="1"/>
</dbReference>
<dbReference type="SUPFAM" id="SSF57889">
    <property type="entry name" value="Cysteine-rich domain"/>
    <property type="match status" value="1"/>
</dbReference>
<dbReference type="SUPFAM" id="SSF47473">
    <property type="entry name" value="EF-hand"/>
    <property type="match status" value="1"/>
</dbReference>
<dbReference type="SUPFAM" id="SSF48366">
    <property type="entry name" value="Ras GEF"/>
    <property type="match status" value="1"/>
</dbReference>
<dbReference type="PROSITE" id="PS00018">
    <property type="entry name" value="EF_HAND_1"/>
    <property type="match status" value="2"/>
</dbReference>
<dbReference type="PROSITE" id="PS50222">
    <property type="entry name" value="EF_HAND_2"/>
    <property type="match status" value="2"/>
</dbReference>
<dbReference type="PROSITE" id="PS50009">
    <property type="entry name" value="RASGEF_CAT"/>
    <property type="match status" value="1"/>
</dbReference>
<dbReference type="PROSITE" id="PS50212">
    <property type="entry name" value="RASGEF_NTER"/>
    <property type="match status" value="1"/>
</dbReference>
<dbReference type="PROSITE" id="PS00479">
    <property type="entry name" value="ZF_DAG_PE_1"/>
    <property type="match status" value="1"/>
</dbReference>
<dbReference type="PROSITE" id="PS50081">
    <property type="entry name" value="ZF_DAG_PE_2"/>
    <property type="match status" value="1"/>
</dbReference>
<reference key="1">
    <citation type="journal article" date="1997" name="Hum. Genet.">
        <title>The germinal centre kinase gene and a novel CDC25-like gene are located in the vicinity of the PYGM gene on 11q13.</title>
        <authorList>
            <person name="Kedra D."/>
            <person name="Seroussi E."/>
            <person name="Fransson I."/>
            <person name="Trifunovic J."/>
            <person name="Clark M."/>
            <person name="Lagercrantz J."/>
            <person name="Blennow E."/>
            <person name="Mehlin H."/>
            <person name="Dumanski J."/>
        </authorList>
    </citation>
    <scope>NUCLEOTIDE SEQUENCE [MRNA] (ISOFORM 1)</scope>
    <scope>TISSUE SPECIFICITY</scope>
</reference>
<reference key="2">
    <citation type="journal article" date="1998" name="Proc. Natl. Acad. Sci. U.S.A.">
        <title>A Rap guanine nucleotide exchange factor enriched highly in the basal ganglia.</title>
        <authorList>
            <person name="Kawasaki H."/>
            <person name="Springett G.M."/>
            <person name="Toki S."/>
            <person name="Canales J.J."/>
            <person name="Harlan P."/>
            <person name="Blumenstiel J.P."/>
            <person name="Chen E.J."/>
            <person name="Bany I.A."/>
            <person name="Mochizuki N."/>
            <person name="Ashbacher A."/>
            <person name="Matsuda M."/>
            <person name="Housman D.E."/>
            <person name="Graybiel A.M."/>
        </authorList>
    </citation>
    <scope>NUCLEOTIDE SEQUENCE [MRNA] (ISOFORM 1)</scope>
    <scope>TISSUE SPECIFICITY</scope>
    <scope>DEVELOPMENTAL STAGE</scope>
    <source>
        <tissue>Frontal cortex</tissue>
    </source>
</reference>
<reference key="3">
    <citation type="journal article" date="2000" name="J. Biol. Chem.">
        <title>Characterization of RasGRP2, a plasma membrane-targeted, dual specificity Ras/Rap exchange factor.</title>
        <authorList>
            <person name="Clyde-Smith J."/>
            <person name="Silins G."/>
            <person name="Gartside M."/>
            <person name="Grimmond S."/>
            <person name="Etheridge M."/>
            <person name="Apolloni A."/>
            <person name="Hayward N."/>
            <person name="Hancock J.F."/>
        </authorList>
    </citation>
    <scope>NUCLEOTIDE SEQUENCE [MRNA] (ISOFORMS 1 AND 2)</scope>
    <scope>FUNCTION</scope>
    <scope>ACTIVITY REGULATION</scope>
    <scope>SUBCELLULAR LOCATION</scope>
    <scope>TOPOLOGY</scope>
    <scope>PALMITOYLATION AT CYS-7 (ISOFORM 2)</scope>
    <scope>MYRISTOYLATION AT GLY-2 (ISOFORM 2)</scope>
    <scope>TISSUE SPECIFICITY</scope>
</reference>
<reference key="4">
    <citation type="journal article" date="2004" name="Nat. Genet.">
        <title>Complete sequencing and characterization of 21,243 full-length human cDNAs.</title>
        <authorList>
            <person name="Ota T."/>
            <person name="Suzuki Y."/>
            <person name="Nishikawa T."/>
            <person name="Otsuki T."/>
            <person name="Sugiyama T."/>
            <person name="Irie R."/>
            <person name="Wakamatsu A."/>
            <person name="Hayashi K."/>
            <person name="Sato H."/>
            <person name="Nagai K."/>
            <person name="Kimura K."/>
            <person name="Makita H."/>
            <person name="Sekine M."/>
            <person name="Obayashi M."/>
            <person name="Nishi T."/>
            <person name="Shibahara T."/>
            <person name="Tanaka T."/>
            <person name="Ishii S."/>
            <person name="Yamamoto J."/>
            <person name="Saito K."/>
            <person name="Kawai Y."/>
            <person name="Isono Y."/>
            <person name="Nakamura Y."/>
            <person name="Nagahari K."/>
            <person name="Murakami K."/>
            <person name="Yasuda T."/>
            <person name="Iwayanagi T."/>
            <person name="Wagatsuma M."/>
            <person name="Shiratori A."/>
            <person name="Sudo H."/>
            <person name="Hosoiri T."/>
            <person name="Kaku Y."/>
            <person name="Kodaira H."/>
            <person name="Kondo H."/>
            <person name="Sugawara M."/>
            <person name="Takahashi M."/>
            <person name="Kanda K."/>
            <person name="Yokoi T."/>
            <person name="Furuya T."/>
            <person name="Kikkawa E."/>
            <person name="Omura Y."/>
            <person name="Abe K."/>
            <person name="Kamihara K."/>
            <person name="Katsuta N."/>
            <person name="Sato K."/>
            <person name="Tanikawa M."/>
            <person name="Yamazaki M."/>
            <person name="Ninomiya K."/>
            <person name="Ishibashi T."/>
            <person name="Yamashita H."/>
            <person name="Murakawa K."/>
            <person name="Fujimori K."/>
            <person name="Tanai H."/>
            <person name="Kimata M."/>
            <person name="Watanabe M."/>
            <person name="Hiraoka S."/>
            <person name="Chiba Y."/>
            <person name="Ishida S."/>
            <person name="Ono Y."/>
            <person name="Takiguchi S."/>
            <person name="Watanabe S."/>
            <person name="Yosida M."/>
            <person name="Hotuta T."/>
            <person name="Kusano J."/>
            <person name="Kanehori K."/>
            <person name="Takahashi-Fujii A."/>
            <person name="Hara H."/>
            <person name="Tanase T.-O."/>
            <person name="Nomura Y."/>
            <person name="Togiya S."/>
            <person name="Komai F."/>
            <person name="Hara R."/>
            <person name="Takeuchi K."/>
            <person name="Arita M."/>
            <person name="Imose N."/>
            <person name="Musashino K."/>
            <person name="Yuuki H."/>
            <person name="Oshima A."/>
            <person name="Sasaki N."/>
            <person name="Aotsuka S."/>
            <person name="Yoshikawa Y."/>
            <person name="Matsunawa H."/>
            <person name="Ichihara T."/>
            <person name="Shiohata N."/>
            <person name="Sano S."/>
            <person name="Moriya S."/>
            <person name="Momiyama H."/>
            <person name="Satoh N."/>
            <person name="Takami S."/>
            <person name="Terashima Y."/>
            <person name="Suzuki O."/>
            <person name="Nakagawa S."/>
            <person name="Senoh A."/>
            <person name="Mizoguchi H."/>
            <person name="Goto Y."/>
            <person name="Shimizu F."/>
            <person name="Wakebe H."/>
            <person name="Hishigaki H."/>
            <person name="Watanabe T."/>
            <person name="Sugiyama A."/>
            <person name="Takemoto M."/>
            <person name="Kawakami B."/>
            <person name="Yamazaki M."/>
            <person name="Watanabe K."/>
            <person name="Kumagai A."/>
            <person name="Itakura S."/>
            <person name="Fukuzumi Y."/>
            <person name="Fujimori Y."/>
            <person name="Komiyama M."/>
            <person name="Tashiro H."/>
            <person name="Tanigami A."/>
            <person name="Fujiwara T."/>
            <person name="Ono T."/>
            <person name="Yamada K."/>
            <person name="Fujii Y."/>
            <person name="Ozaki K."/>
            <person name="Hirao M."/>
            <person name="Ohmori Y."/>
            <person name="Kawabata A."/>
            <person name="Hikiji T."/>
            <person name="Kobatake N."/>
            <person name="Inagaki H."/>
            <person name="Ikema Y."/>
            <person name="Okamoto S."/>
            <person name="Okitani R."/>
            <person name="Kawakami T."/>
            <person name="Noguchi S."/>
            <person name="Itoh T."/>
            <person name="Shigeta K."/>
            <person name="Senba T."/>
            <person name="Matsumura K."/>
            <person name="Nakajima Y."/>
            <person name="Mizuno T."/>
            <person name="Morinaga M."/>
            <person name="Sasaki M."/>
            <person name="Togashi T."/>
            <person name="Oyama M."/>
            <person name="Hata H."/>
            <person name="Watanabe M."/>
            <person name="Komatsu T."/>
            <person name="Mizushima-Sugano J."/>
            <person name="Satoh T."/>
            <person name="Shirai Y."/>
            <person name="Takahashi Y."/>
            <person name="Nakagawa K."/>
            <person name="Okumura K."/>
            <person name="Nagase T."/>
            <person name="Nomura N."/>
            <person name="Kikuchi H."/>
            <person name="Masuho Y."/>
            <person name="Yamashita R."/>
            <person name="Nakai K."/>
            <person name="Yada T."/>
            <person name="Nakamura Y."/>
            <person name="Ohara O."/>
            <person name="Isogai T."/>
            <person name="Sugano S."/>
        </authorList>
    </citation>
    <scope>NUCLEOTIDE SEQUENCE [LARGE SCALE MRNA] (ISOFORM 4)</scope>
    <source>
        <tissue>Spleen</tissue>
    </source>
</reference>
<reference key="5">
    <citation type="journal article" date="2006" name="Nature">
        <title>Human chromosome 11 DNA sequence and analysis including novel gene identification.</title>
        <authorList>
            <person name="Taylor T.D."/>
            <person name="Noguchi H."/>
            <person name="Totoki Y."/>
            <person name="Toyoda A."/>
            <person name="Kuroki Y."/>
            <person name="Dewar K."/>
            <person name="Lloyd C."/>
            <person name="Itoh T."/>
            <person name="Takeda T."/>
            <person name="Kim D.-W."/>
            <person name="She X."/>
            <person name="Barlow K.F."/>
            <person name="Bloom T."/>
            <person name="Bruford E."/>
            <person name="Chang J.L."/>
            <person name="Cuomo C.A."/>
            <person name="Eichler E."/>
            <person name="FitzGerald M.G."/>
            <person name="Jaffe D.B."/>
            <person name="LaButti K."/>
            <person name="Nicol R."/>
            <person name="Park H.-S."/>
            <person name="Seaman C."/>
            <person name="Sougnez C."/>
            <person name="Yang X."/>
            <person name="Zimmer A.R."/>
            <person name="Zody M.C."/>
            <person name="Birren B.W."/>
            <person name="Nusbaum C."/>
            <person name="Fujiyama A."/>
            <person name="Hattori M."/>
            <person name="Rogers J."/>
            <person name="Lander E.S."/>
            <person name="Sakaki Y."/>
        </authorList>
    </citation>
    <scope>NUCLEOTIDE SEQUENCE [LARGE SCALE GENOMIC DNA]</scope>
</reference>
<reference key="6">
    <citation type="submission" date="2005-07" db="EMBL/GenBank/DDBJ databases">
        <authorList>
            <person name="Mural R.J."/>
            <person name="Istrail S."/>
            <person name="Sutton G.G."/>
            <person name="Florea L."/>
            <person name="Halpern A.L."/>
            <person name="Mobarry C.M."/>
            <person name="Lippert R."/>
            <person name="Walenz B."/>
            <person name="Shatkay H."/>
            <person name="Dew I."/>
            <person name="Miller J.R."/>
            <person name="Flanigan M.J."/>
            <person name="Edwards N.J."/>
            <person name="Bolanos R."/>
            <person name="Fasulo D."/>
            <person name="Halldorsson B.V."/>
            <person name="Hannenhalli S."/>
            <person name="Turner R."/>
            <person name="Yooseph S."/>
            <person name="Lu F."/>
            <person name="Nusskern D.R."/>
            <person name="Shue B.C."/>
            <person name="Zheng X.H."/>
            <person name="Zhong F."/>
            <person name="Delcher A.L."/>
            <person name="Huson D.H."/>
            <person name="Kravitz S.A."/>
            <person name="Mouchard L."/>
            <person name="Reinert K."/>
            <person name="Remington K.A."/>
            <person name="Clark A.G."/>
            <person name="Waterman M.S."/>
            <person name="Eichler E.E."/>
            <person name="Adams M.D."/>
            <person name="Hunkapiller M.W."/>
            <person name="Myers E.W."/>
            <person name="Venter J.C."/>
        </authorList>
    </citation>
    <scope>NUCLEOTIDE SEQUENCE [LARGE SCALE GENOMIC DNA]</scope>
</reference>
<reference key="7">
    <citation type="journal article" date="2004" name="Genome Res.">
        <title>The status, quality, and expansion of the NIH full-length cDNA project: the Mammalian Gene Collection (MGC).</title>
        <authorList>
            <consortium name="The MGC Project Team"/>
        </authorList>
    </citation>
    <scope>NUCLEOTIDE SEQUENCE [LARGE SCALE MRNA] (ISOFORM 1)</scope>
    <source>
        <tissue>Brain</tissue>
    </source>
</reference>
<reference key="8">
    <citation type="journal article" date="2001" name="J. Biol. Chem.">
        <title>Activation of the Rap1 guanine nucleotide exchange gene, CalDAG-GEF I, in BXH-2 murine myeloid leukemia.</title>
        <authorList>
            <person name="Dupuy A.J."/>
            <person name="Morgan K."/>
            <person name="von Lintig F.C."/>
            <person name="Shen H."/>
            <person name="Acar H."/>
            <person name="Hasz D.E."/>
            <person name="Jenkins N.A."/>
            <person name="Copeland N.G."/>
            <person name="Boss G.R."/>
            <person name="Largaespada D.A."/>
        </authorList>
    </citation>
    <scope>ALTERNATIVE SPLICING (ISOFORM 3)</scope>
</reference>
<reference key="9">
    <citation type="journal article" date="2004" name="J. Biol. Chem.">
        <title>Rap1-mediated lymphocyte function-associated antigen-1 activation by the T cell antigen receptor is dependent on phospholipase C-gamma1.</title>
        <authorList>
            <person name="Katagiri K."/>
            <person name="Shimonaka M."/>
            <person name="Kinashi T."/>
        </authorList>
    </citation>
    <scope>FUNCTION</scope>
    <scope>INTERACTION WITH RAP1</scope>
</reference>
<reference key="10">
    <citation type="journal article" date="2004" name="J. Biol. Chem.">
        <title>F-actin-dependent translocation of the Rap1 GDP/GTP exchange factor RasGRP2.</title>
        <authorList>
            <person name="Caloca M.J."/>
            <person name="Zugaza J.L."/>
            <person name="Vicente-Manzanares M."/>
            <person name="Sanchez-Madrid F."/>
            <person name="Bustelo X.R."/>
        </authorList>
    </citation>
    <scope>SUBCELLULAR LOCATION</scope>
    <scope>INTERACTION WITH F-ACTIN</scope>
</reference>
<reference key="11">
    <citation type="journal article" date="2007" name="Blood">
        <title>Essential role for Rap1 GTPase and its guanine exchange factor CalDAG-GEFI in LFA-1 but not VLA-4 integrin mediated human T-cell adhesion.</title>
        <authorList>
            <person name="Ghandour H."/>
            <person name="Cullere X."/>
            <person name="Alvarez A."/>
            <person name="Luscinskas F.W."/>
            <person name="Mayadas T.N."/>
        </authorList>
    </citation>
    <scope>FUNCTION IN T-LYMPHOCYTES ADHESION</scope>
    <scope>TISSUE SPECIFICITY</scope>
</reference>
<reference key="12">
    <citation type="journal article" date="2007" name="J. Exp. Med.">
        <title>A LAD-III syndrome is associated with defective expression of the Rap-1 activator CalDAG-GEFI in lymphocytes, neutrophils, and platelets.</title>
        <authorList>
            <person name="Pasvolsky R."/>
            <person name="Feigelson S.W."/>
            <person name="Kilic S.S."/>
            <person name="Simon A.J."/>
            <person name="Tal-Lapidot G."/>
            <person name="Grabovsky V."/>
            <person name="Crittenden J.R."/>
            <person name="Amariglio N."/>
            <person name="Safran M."/>
            <person name="Graybiel A.M."/>
            <person name="Rechavi G."/>
            <person name="Ben-Dor S."/>
            <person name="Etzioni A."/>
            <person name="Alon R."/>
        </authorList>
    </citation>
    <scope>FUNCTION IN INTEGRIN ACTIVATION</scope>
    <scope>TISSUE SPECIFICITY</scope>
</reference>
<reference key="13">
    <citation type="journal article" date="2009" name="Blood">
        <title>LAD-1/variant syndrome is caused by mutations in FERMT3.</title>
        <authorList>
            <person name="Kuijpers T.W."/>
            <person name="van de Vijver E."/>
            <person name="Weterman M.A.J."/>
            <person name="de Boer M."/>
            <person name="Tool A.T.J."/>
            <person name="van den Berg T.K."/>
            <person name="Moser M."/>
            <person name="Jakobs M.E."/>
            <person name="Seeger K."/>
            <person name="Sanal O."/>
            <person name="Uenal S."/>
            <person name="Cetin M."/>
            <person name="Roos D."/>
            <person name="Verhoeven A.J."/>
            <person name="Baas F."/>
        </authorList>
    </citation>
    <scope>LACK OF INVOLVEMENT IN LAD3</scope>
</reference>
<reference key="14">
    <citation type="journal article" date="2009" name="Nat. Med.">
        <title>Leukocyte adhesion deficiency-III is caused by mutations in KINDLIN3 affecting integrin activation.</title>
        <authorList>
            <person name="Svensson L."/>
            <person name="Howarth K."/>
            <person name="McDowall A."/>
            <person name="Patzak I."/>
            <person name="Evans R."/>
            <person name="Ussar S."/>
            <person name="Moser M."/>
            <person name="Metin A."/>
            <person name="Fried M."/>
            <person name="Tomlinson I."/>
            <person name="Hogg N."/>
        </authorList>
    </citation>
    <scope>LACK OF INVOLVEMENT IN LAD3</scope>
</reference>
<reference key="15">
    <citation type="journal article" date="2009" name="Nat. Med.">
        <title>A point mutation in KINDLIN3 ablates activation of three integrin subfamilies in humans.</title>
        <authorList>
            <person name="Malinin N.L."/>
            <person name="Zhang L."/>
            <person name="Choi J."/>
            <person name="Ciocea A."/>
            <person name="Razorenova O."/>
            <person name="Ma Y.-Q."/>
            <person name="Podrez E.A."/>
            <person name="Tosi M."/>
            <person name="Lennon D.P."/>
            <person name="Caplan A.I."/>
            <person name="Shurin S.B."/>
            <person name="Plow E.F."/>
            <person name="Byzova T.V."/>
        </authorList>
    </citation>
    <scope>LACK OF INVOLVEMENT IN LAD3</scope>
</reference>
<reference key="16">
    <citation type="journal article" date="2014" name="J. Exp. Med.">
        <title>Human CalDAG-GEFI gene (RASGRP2) mutation affects platelet function and causes severe bleeding.</title>
        <authorList>
            <person name="Canault M."/>
            <person name="Ghalloussi D."/>
            <person name="Grosdidier C."/>
            <person name="Guinier M."/>
            <person name="Perret C."/>
            <person name="Chelghoum N."/>
            <person name="Germain M."/>
            <person name="Raslova H."/>
            <person name="Peiretti F."/>
            <person name="Morange P.E."/>
            <person name="Saut N."/>
            <person name="Pillois X."/>
            <person name="Nurden A.T."/>
            <person name="Cambien F."/>
            <person name="Pierres A."/>
            <person name="van den Berg T.K."/>
            <person name="Kuijpers T.W."/>
            <person name="Alessi M.C."/>
            <person name="Tregouet D.A."/>
        </authorList>
    </citation>
    <scope>FUNCTION</scope>
    <scope>INVOLVEMENT IN BDPLT18</scope>
    <scope>VARIANT BDPLT18 TRP-248</scope>
    <scope>CHARACTERIZATION OF VARIANT BDPLT18 TRP-248</scope>
</reference>
<reference key="17">
    <citation type="journal article" date="2016" name="Blood">
        <title>Novel mutations in RASGRP2, which encodes CalDAG-GEFI, abrogate Rap1 activation, causing platelet dysfunction.</title>
        <authorList>
            <person name="Lozano M.L."/>
            <person name="Cook A."/>
            <person name="Bastida J.M."/>
            <person name="Paul D.S."/>
            <person name="Iruin G."/>
            <person name="Cid A.R."/>
            <person name="Adan-Pedroso R."/>
            <person name="Ramon Gonzalez-Porras J."/>
            <person name="Hernandez-Rivas J.M."/>
            <person name="Fletcher S.J."/>
            <person name="Johnson B."/>
            <person name="Morgan N."/>
            <person name="Ferrer-Marin F."/>
            <person name="Vicente V."/>
            <person name="Sondek J."/>
            <person name="Watson S.P."/>
            <person name="Bergmeier W."/>
            <person name="Rivera J."/>
        </authorList>
    </citation>
    <scope>FUNCTION</scope>
    <scope>VARIANTS BDPLT18 113-ARG--LEU-609 DEL AND PHE-381</scope>
    <scope>CHARACTERIZATION OF VARIANTS BDPLT18 113-ARG--LEU-609 DEL AND PHE-381</scope>
</reference>
<reference key="18">
    <citation type="journal article" date="2013" name="Elife">
        <title>Structural analysis of autoinhibition in the Ras-specific exchange factor RasGRP1.</title>
        <authorList>
            <person name="Iwig J.S."/>
            <person name="Vercoulen Y."/>
            <person name="Das R."/>
            <person name="Barros T."/>
            <person name="Limnander A."/>
            <person name="Che Y."/>
            <person name="Pelton J.G."/>
            <person name="Wemmer D.E."/>
            <person name="Roose J.P."/>
            <person name="Kuriyan J."/>
        </authorList>
    </citation>
    <scope>STRUCTURE BY NMR OF 417-497 IN COMPLEX WITH CALCIUM</scope>
</reference>
<reference key="19">
    <citation type="journal article" date="2017" name="Platelets">
        <title>Marked bleeding diathesis in patients with platelet dysfunction due to a novel mutation in RASGRP2, encoding CalDAG-GEFI (p.Gly305Asp).</title>
        <authorList>
            <person name="Bermejo E."/>
            <person name="Alberto M.F."/>
            <person name="Paul D.S."/>
            <person name="Cook A.A."/>
            <person name="Nurden P."/>
            <person name="Sanchez Luceros A."/>
            <person name="Nurden A.T."/>
            <person name="Bergmeier W."/>
        </authorList>
    </citation>
    <scope>VARIANT BDPLT18 ASP-305</scope>
</reference>
<reference key="20">
    <citation type="journal article" date="2017" name="Platelets">
        <title>Identification of two novel mutations in RASGRP2 affecting platelet CalDAG-GEFI expression and function in patients with bleeding diathesis.</title>
        <authorList>
            <person name="Sevivas T."/>
            <person name="Bastida J.M."/>
            <person name="Paul D.S."/>
            <person name="Caparros E."/>
            <person name="Palma-Barqueros V."/>
            <person name="Coucelo M."/>
            <person name="Marques D."/>
            <person name="Ferrer-Marin F."/>
            <person name="Gonzalez-Porras J.R."/>
            <person name="Vicente V."/>
            <person name="Hernandez-Rivas J.M."/>
            <person name="Watson S.P."/>
            <person name="Lozano M.L."/>
            <person name="Bergmeier W."/>
            <person name="Rivera J."/>
        </authorList>
    </citation>
    <scope>VARIANTS BDPLT18 236-GLN--LEU-609 DEL AND TYR-296</scope>
    <scope>CHARACTERIZATION OF VARIANTS BDPLT18 236-GLN--LEU-609 DEL AND TYR-296</scope>
</reference>
<protein>
    <recommendedName>
        <fullName>RAS guanyl-releasing protein 2</fullName>
    </recommendedName>
    <alternativeName>
        <fullName>Calcium and DAG-regulated guanine nucleotide exchange factor I</fullName>
        <shortName>CalDAG-GEFI</shortName>
    </alternativeName>
    <alternativeName>
        <fullName>Cdc25-like protein</fullName>
        <shortName>hCDC25L</shortName>
    </alternativeName>
    <alternativeName>
        <fullName>F25B3.3 kinase-like protein</fullName>
    </alternativeName>
</protein>
<gene>
    <name type="primary">RASGRP2</name>
    <name type="synonym">CDC25L</name>
    <name type="synonym">MCG7</name>
</gene>
<organism>
    <name type="scientific">Homo sapiens</name>
    <name type="common">Human</name>
    <dbReference type="NCBI Taxonomy" id="9606"/>
    <lineage>
        <taxon>Eukaryota</taxon>
        <taxon>Metazoa</taxon>
        <taxon>Chordata</taxon>
        <taxon>Craniata</taxon>
        <taxon>Vertebrata</taxon>
        <taxon>Euteleostomi</taxon>
        <taxon>Mammalia</taxon>
        <taxon>Eutheria</taxon>
        <taxon>Euarchontoglires</taxon>
        <taxon>Primates</taxon>
        <taxon>Haplorrhini</taxon>
        <taxon>Catarrhini</taxon>
        <taxon>Hominidae</taxon>
        <taxon>Homo</taxon>
    </lineage>
</organism>
<keyword id="KW-0002">3D-structure</keyword>
<keyword id="KW-0025">Alternative splicing</keyword>
<keyword id="KW-0106">Calcium</keyword>
<keyword id="KW-1003">Cell membrane</keyword>
<keyword id="KW-0966">Cell projection</keyword>
<keyword id="KW-0963">Cytoplasm</keyword>
<keyword id="KW-0225">Disease variant</keyword>
<keyword id="KW-0344">Guanine-nucleotide releasing factor</keyword>
<keyword id="KW-0472">Membrane</keyword>
<keyword id="KW-0479">Metal-binding</keyword>
<keyword id="KW-0597">Phosphoprotein</keyword>
<keyword id="KW-1267">Proteomics identification</keyword>
<keyword id="KW-1185">Reference proteome</keyword>
<keyword id="KW-0677">Repeat</keyword>
<keyword id="KW-0770">Synapse</keyword>
<keyword id="KW-0771">Synaptosome</keyword>
<keyword id="KW-0862">Zinc</keyword>
<keyword id="KW-0863">Zinc-finger</keyword>
<sequence>MAGTLDLDKGCTVEELLRGCIEAFDDSGKVRDPQLVRMFLMMHPWYIPSSQLAAKLLHIYQQSRKDNSNSLQVKTCHLVRYWISAFPAEFDLNPELAEQIKELKALLDQEGNRRHSSLIDIDSVPTYKWKRQVTQRNPVGQKKRKMSLLFDHLEPMELAEHLTYLEYRSFCKILFQDYHSFVTHGCTVDNPVLERFISLFNSVSQWVQLMILSKPTAPQRALVITHFVHVAEKLLQLQNFNTLMAVVGGLSHSSISRLKETHSHVSPETIKLWEGLTELVTATGNYGNYRRRLAACVGFRFPILGVHLKDLVALQLALPDWLDPARTRLNGAKMKQLFSILEELAMVTSLRPPVQANPDLLSLLTVSLDQYQTEDELYQLSLQREPRSKSSPTSPTSCTPPPRPPVLEEWTSAAKPKLDQALVVEHIEKMVESVFRNFDVDGDGHISQEEFQIIRGNFPYLSAFGDLDQNQDGCISREEMVSYFLRSSSVLGGRMGFVHNFQESNSLRPVACRHCKALILGIYKQGLKCRACGVNCHKQCKDRLSVECRRRAQSVSLEGSAPSPSPMHSHHHRAFSFSLPRPGRRGSRPPEIREEEVQTVEDGVFDIHL</sequence>
<name>GRP2_HUMAN</name>
<feature type="chain" id="PRO_0000315608" description="RAS guanyl-releasing protein 2">
    <location>
        <begin position="1"/>
        <end position="609"/>
    </location>
</feature>
<feature type="domain" description="N-terminal Ras-GEF" evidence="4">
    <location>
        <begin position="4"/>
        <end position="126"/>
    </location>
</feature>
<feature type="domain" description="Ras-GEF" evidence="5">
    <location>
        <begin position="154"/>
        <end position="387"/>
    </location>
</feature>
<feature type="domain" description="EF-hand 1" evidence="7">
    <location>
        <begin position="426"/>
        <end position="461"/>
    </location>
</feature>
<feature type="domain" description="EF-hand 2" evidence="7">
    <location>
        <begin position="455"/>
        <end position="490"/>
    </location>
</feature>
<feature type="zinc finger region" description="Phorbol-ester/DAG-type" evidence="6">
    <location>
        <begin position="498"/>
        <end position="548"/>
    </location>
</feature>
<feature type="region of interest" description="Disordered" evidence="8">
    <location>
        <begin position="382"/>
        <end position="406"/>
    </location>
</feature>
<feature type="region of interest" description="Disordered" evidence="8">
    <location>
        <begin position="557"/>
        <end position="592"/>
    </location>
</feature>
<feature type="binding site" evidence="7 24">
    <location>
        <position position="439"/>
    </location>
    <ligand>
        <name>Ca(2+)</name>
        <dbReference type="ChEBI" id="CHEBI:29108"/>
        <label>1</label>
    </ligand>
</feature>
<feature type="binding site" evidence="7 24">
    <location>
        <position position="441"/>
    </location>
    <ligand>
        <name>Ca(2+)</name>
        <dbReference type="ChEBI" id="CHEBI:29108"/>
        <label>1</label>
    </ligand>
</feature>
<feature type="binding site" evidence="7 24">
    <location>
        <position position="443"/>
    </location>
    <ligand>
        <name>Ca(2+)</name>
        <dbReference type="ChEBI" id="CHEBI:29108"/>
        <label>1</label>
    </ligand>
</feature>
<feature type="binding site" evidence="7 24">
    <location>
        <position position="445"/>
    </location>
    <ligand>
        <name>Ca(2+)</name>
        <dbReference type="ChEBI" id="CHEBI:29108"/>
        <label>1</label>
    </ligand>
</feature>
<feature type="binding site" evidence="7 24">
    <location>
        <position position="450"/>
    </location>
    <ligand>
        <name>Ca(2+)</name>
        <dbReference type="ChEBI" id="CHEBI:29108"/>
        <label>1</label>
    </ligand>
</feature>
<feature type="binding site" evidence="7 24">
    <location>
        <position position="468"/>
    </location>
    <ligand>
        <name>Ca(2+)</name>
        <dbReference type="ChEBI" id="CHEBI:29108"/>
        <label>2</label>
    </ligand>
</feature>
<feature type="binding site" evidence="7 24">
    <location>
        <position position="470"/>
    </location>
    <ligand>
        <name>Ca(2+)</name>
        <dbReference type="ChEBI" id="CHEBI:29108"/>
        <label>2</label>
    </ligand>
</feature>
<feature type="binding site" evidence="7 24">
    <location>
        <position position="472"/>
    </location>
    <ligand>
        <name>Ca(2+)</name>
        <dbReference type="ChEBI" id="CHEBI:29108"/>
        <label>2</label>
    </ligand>
</feature>
<feature type="binding site" evidence="7 24">
    <location>
        <position position="474"/>
    </location>
    <ligand>
        <name>Ca(2+)</name>
        <dbReference type="ChEBI" id="CHEBI:29108"/>
        <label>2</label>
    </ligand>
</feature>
<feature type="binding site" evidence="7 24">
    <location>
        <position position="479"/>
    </location>
    <ligand>
        <name>Ca(2+)</name>
        <dbReference type="ChEBI" id="CHEBI:29108"/>
        <label>2</label>
    </ligand>
</feature>
<feature type="modified residue" description="Phosphoserine" evidence="3">
    <location>
        <position position="116"/>
    </location>
</feature>
<feature type="modified residue" description="Phosphoserine" evidence="3">
    <location>
        <position position="117"/>
    </location>
</feature>
<feature type="modified residue" description="Phosphoserine" evidence="3">
    <location>
        <position position="147"/>
    </location>
</feature>
<feature type="modified residue" description="Phosphoserine" evidence="3">
    <location>
        <position position="554"/>
    </location>
</feature>
<feature type="modified residue" description="Phosphoserine" evidence="2">
    <location>
        <position position="576"/>
    </location>
</feature>
<feature type="splice variant" id="VSP_030574" description="In isoform 2." evidence="20">
    <original>M</original>
    <variation>MGTQRLCGRGTQGWPGSSEQHVQEATSSAGLHSGVDELGVRSEPGGRLPERSLGPAHPAPAAM</variation>
    <location>
        <position position="1"/>
    </location>
</feature>
<feature type="splice variant" id="VSP_030575" description="In isoform 3." evidence="22">
    <original>P</original>
    <variation>CVGAEHRGLGGHSVSYTICA</variation>
    <location>
        <position position="125"/>
    </location>
</feature>
<feature type="splice variant" id="VSP_030576" description="In isoform 3." evidence="22">
    <location>
        <begin position="126"/>
        <end position="609"/>
    </location>
</feature>
<feature type="splice variant" id="VSP_054132" description="In isoform 4." evidence="21">
    <original>P</original>
    <variation>PA</variation>
    <location>
        <position position="590"/>
    </location>
</feature>
<feature type="sequence variant" id="VAR_079614" description="In BDPLT18." evidence="15">
    <location>
        <begin position="113"/>
        <end position="609"/>
    </location>
</feature>
<feature type="sequence variant" id="VAR_079615" description="In BDPLT18; lack of mutant protein in platelets from a patient homozygous for the mutation." evidence="17">
    <location>
        <begin position="236"/>
        <end position="609"/>
    </location>
</feature>
<feature type="sequence variant" id="VAR_071474" description="In BDPLT18; prevents Rap1 activation upon calcium stimulation; reduces platelet adhesion and spreading; dbSNP:rs587777529." evidence="14">
    <original>G</original>
    <variation>W</variation>
    <location>
        <position position="248"/>
    </location>
</feature>
<feature type="sequence variant" id="VAR_079616" description="In BDPLT18; lack of mutant protein in platelets from a patient homozygous for the mutation." evidence="17">
    <original>C</original>
    <variation>Y</variation>
    <location>
        <position position="296"/>
    </location>
</feature>
<feature type="sequence variant" id="VAR_079617" description="In BDPLT18." evidence="16">
    <original>G</original>
    <variation>D</variation>
    <location>
        <position position="305"/>
    </location>
</feature>
<feature type="sequence variant" id="VAR_079618" description="In BDPLT18; loss of guanyl-nucleotide exchange factor activity; dbSNP:rs767965347." evidence="15">
    <original>S</original>
    <variation>F</variation>
    <location>
        <position position="381"/>
    </location>
</feature>
<feature type="sequence variant" id="VAR_038257" description="In dbSNP:rs2301562.">
    <original>G</original>
    <variation>A</variation>
    <location>
        <position position="493"/>
    </location>
</feature>
<feature type="helix" evidence="26">
    <location>
        <begin position="13"/>
        <end position="22"/>
    </location>
</feature>
<feature type="helix" evidence="26">
    <location>
        <begin position="33"/>
        <end position="42"/>
    </location>
</feature>
<feature type="helix" evidence="26">
    <location>
        <begin position="43"/>
        <end position="45"/>
    </location>
</feature>
<feature type="helix" evidence="26">
    <location>
        <begin position="49"/>
        <end position="65"/>
    </location>
</feature>
<feature type="helix" evidence="26">
    <location>
        <begin position="69"/>
        <end position="85"/>
    </location>
</feature>
<feature type="helix" evidence="26">
    <location>
        <begin position="87"/>
        <end position="92"/>
    </location>
</feature>
<feature type="helix" evidence="26">
    <location>
        <begin position="94"/>
        <end position="110"/>
    </location>
</feature>
<feature type="helix" evidence="26">
    <location>
        <begin position="116"/>
        <end position="118"/>
    </location>
</feature>
<feature type="helix" evidence="26">
    <location>
        <begin position="129"/>
        <end position="132"/>
    </location>
</feature>
<feature type="strand" evidence="26">
    <location>
        <begin position="137"/>
        <end position="140"/>
    </location>
</feature>
<feature type="helix" evidence="26">
    <location>
        <begin position="145"/>
        <end position="150"/>
    </location>
</feature>
<feature type="helix" evidence="26">
    <location>
        <begin position="155"/>
        <end position="170"/>
    </location>
</feature>
<feature type="helix" evidence="26">
    <location>
        <begin position="175"/>
        <end position="184"/>
    </location>
</feature>
<feature type="helix" evidence="26">
    <location>
        <begin position="191"/>
        <end position="212"/>
    </location>
</feature>
<feature type="helix" evidence="26">
    <location>
        <begin position="217"/>
        <end position="236"/>
    </location>
</feature>
<feature type="helix" evidence="26">
    <location>
        <begin position="240"/>
        <end position="250"/>
    </location>
</feature>
<feature type="helix" evidence="26">
    <location>
        <begin position="253"/>
        <end position="256"/>
    </location>
</feature>
<feature type="helix" evidence="26">
    <location>
        <begin position="259"/>
        <end position="263"/>
    </location>
</feature>
<feature type="helix" evidence="26">
    <location>
        <begin position="267"/>
        <end position="279"/>
    </location>
</feature>
<feature type="turn" evidence="26">
    <location>
        <begin position="283"/>
        <end position="286"/>
    </location>
</feature>
<feature type="helix" evidence="26">
    <location>
        <begin position="287"/>
        <end position="294"/>
    </location>
</feature>
<feature type="helix" evidence="26">
    <location>
        <begin position="306"/>
        <end position="317"/>
    </location>
</feature>
<feature type="strand" evidence="26">
    <location>
        <begin position="320"/>
        <end position="323"/>
    </location>
</feature>
<feature type="helix" evidence="26">
    <location>
        <begin position="331"/>
        <end position="346"/>
    </location>
</feature>
<feature type="helix" evidence="26">
    <location>
        <begin position="347"/>
        <end position="349"/>
    </location>
</feature>
<feature type="helix" evidence="26">
    <location>
        <begin position="358"/>
        <end position="369"/>
    </location>
</feature>
<feature type="helix" evidence="26">
    <location>
        <begin position="374"/>
        <end position="384"/>
    </location>
</feature>
<feature type="helix" evidence="25">
    <location>
        <begin position="420"/>
        <end position="437"/>
    </location>
</feature>
<feature type="helix" evidence="25">
    <location>
        <begin position="448"/>
        <end position="454"/>
    </location>
</feature>
<feature type="turn" evidence="25">
    <location>
        <begin position="455"/>
        <end position="457"/>
    </location>
</feature>
<feature type="helix" evidence="25">
    <location>
        <begin position="464"/>
        <end position="467"/>
    </location>
</feature>
<feature type="helix" evidence="25">
    <location>
        <begin position="477"/>
        <end position="486"/>
    </location>
</feature>
<feature type="strand" evidence="25">
    <location>
        <begin position="490"/>
        <end position="492"/>
    </location>
</feature>
<feature type="initiator methionine" description="Removed" evidence="22">
    <location sequence="Q7LDG7-2">
        <position position="1"/>
    </location>
</feature>
<feature type="lipid moiety-binding region" description="N-myristoyl glycine" evidence="9">
    <location sequence="Q7LDG7-2">
        <position position="2"/>
    </location>
</feature>
<feature type="lipid moiety-binding region" description="S-palmitoyl cysteine" evidence="9">
    <location sequence="Q7LDG7-2">
        <position position="7"/>
    </location>
</feature>
<comment type="function">
    <text evidence="9 10 12 13 14 15">Functions as a calcium- and DAG-regulated nucleotide exchange factor specifically activating Rap through the exchange of bound GDP for GTP. May also activate other GTPases such as RRAS, RRAS2, NRAS, KRAS but not HRAS. Functions in aggregation of platelets and adhesion of T-lymphocytes and neutrophils probably through inside-out integrin activation. May function in the muscarinic acetylcholine receptor M1/CHRM1 signaling pathway.</text>
</comment>
<comment type="activity regulation">
    <text evidence="9">Isoform 1 and isoform 2 are differently regulated by calcium and DAG.</text>
</comment>
<comment type="subunit">
    <text evidence="1 10 11">Forms a signaling complex with RAP1 and BRAF (By similarity). Interacts with RAP1. Interacts with F-actin.</text>
</comment>
<comment type="subcellular location">
    <subcellularLocation>
        <location>Cytoplasm</location>
        <location>Cytosol</location>
    </subcellularLocation>
    <subcellularLocation>
        <location>Cell membrane</location>
        <topology>Peripheral membrane protein</topology>
    </subcellularLocation>
    <subcellularLocation>
        <location evidence="22">Synapse</location>
        <location evidence="22">Synaptosome</location>
    </subcellularLocation>
    <subcellularLocation>
        <location evidence="22">Cell projection</location>
        <location evidence="22">Ruffle membrane</location>
        <topology evidence="22">Peripheral membrane protein</topology>
    </subcellularLocation>
    <text evidence="1">Found both in the cytosol and associated with membranes. Isoform 2 mainly localizes to the cell membrane. Enriched at juxtamembrane areas and membrane ruffles through association with F-actin. Localizes to the cell bodies and axons of striatal neurons (By similarity).</text>
</comment>
<comment type="alternative products">
    <event type="alternative splicing"/>
    <isoform>
        <id>Q7LDG7-1</id>
        <name>1</name>
        <name>CalDAG-GEFI</name>
        <name>CalDAG-GEFIa</name>
        <sequence type="displayed"/>
    </isoform>
    <isoform>
        <id>Q7LDG7-2</id>
        <name>2</name>
        <name>RasGRP2</name>
        <sequence type="described" ref="VSP_030574"/>
    </isoform>
    <isoform>
        <id>Q7LDG7-3</id>
        <name>3</name>
        <name>CalDAG-GEFIb</name>
        <sequence type="described" ref="VSP_030575 VSP_030576"/>
    </isoform>
    <isoform>
        <id>Q7LDG7-4</id>
        <name>4</name>
        <sequence type="described" ref="VSP_054132"/>
    </isoform>
</comment>
<comment type="tissue specificity">
    <text evidence="9 12 13 18 19">Detected in platelets, neutrophils and T lymphocytes (at protein level). Expressed in brain where it is enriched in the striatum. Also expressed in the hematopoietic system. Detected in heart, brain, lung, placenta, liver, skeletal muscle and kidney.</text>
</comment>
<comment type="developmental stage">
    <text evidence="19">Expressed in fetal brain, lung, liver and kidney.</text>
</comment>
<comment type="domain">
    <text>The N-terminal Ras-GEF domain mediates association with F-actin.</text>
</comment>
<comment type="PTM">
    <text evidence="9">Isoform 2 is palmitoylated and myristoylated.</text>
</comment>
<comment type="disease" evidence="14 15 16 17">
    <disease id="DI-04150">
        <name>Bleeding disorder, platelet-type, 18</name>
        <acronym>BDPLT18</acronym>
        <description>A disorder characterized by increased bleeding tendency due to platelet dysfunction. Clinical features include epistaxis, hematomas, bleeding after tooth extraction, and menorrhagia.</description>
        <dbReference type="MIM" id="615888"/>
    </disease>
    <text>The disease is caused by variants affecting the gene represented in this entry.</text>
</comment>
<comment type="miscellaneous">
    <molecule>Isoform 3</molecule>
    <text evidence="22">The corresponding protein is not undetectable.</text>
</comment>
<comment type="similarity">
    <text evidence="22">Belongs to the RASGRP family.</text>
</comment>
<comment type="caution">
    <text evidence="23">Defects in RASGRP2 were initially thought (PubMed:17576779) to be the cause of leukocyte adhesion deficiency type 3 (LAD3), a syndrome characterized by recurrent bacterial infections and major bleeding disorders. However, it was later shown (PubMed:19064721, PubMed:19234463, PubMed:19234460) that it is not the case and that LAD3 is caused by defects in FERMT3 gene.</text>
</comment>
<comment type="online information" name="RASGRP2base">
    <link uri="https://databases.lovd.nl/shared/genes/RASGRP2"/>
    <text>RASGRP2 mutation db</text>
</comment>